<sequence>MKHIISPLDLSLSELSDVLNLAEKIIVDPKQYSECCQGKKLATLFYEPSTRTRLSFEAAMLNLGGSVLGFSSADSSSAAKGESVADTIRVISSYADICAMRHPKEGAPLVASTYSSIPVINAGDGGHNHPTQTLTDLLTIKNLKGRLDNLTIGFCGDLKFGRTVHSLINAMVRYEGIKFVLISPEELKIPAYLREEVLDRGNIPYEEVKNLEAVMPELDILYMTRVQKERFFNEEDYIRLKDSFILDAKKMEGAKEDMLVLHPLPRVNEIATEIDNDPRAVYFKQAEFGVYARMALIMLLLNVVPQE</sequence>
<keyword id="KW-0665">Pyrimidine biosynthesis</keyword>
<keyword id="KW-1185">Reference proteome</keyword>
<keyword id="KW-0808">Transferase</keyword>
<comment type="function">
    <text evidence="1">Catalyzes the condensation of carbamoyl phosphate and aspartate to form carbamoyl aspartate and inorganic phosphate, the committed step in the de novo pyrimidine nucleotide biosynthesis pathway.</text>
</comment>
<comment type="catalytic activity">
    <reaction evidence="1">
        <text>carbamoyl phosphate + L-aspartate = N-carbamoyl-L-aspartate + phosphate + H(+)</text>
        <dbReference type="Rhea" id="RHEA:20013"/>
        <dbReference type="ChEBI" id="CHEBI:15378"/>
        <dbReference type="ChEBI" id="CHEBI:29991"/>
        <dbReference type="ChEBI" id="CHEBI:32814"/>
        <dbReference type="ChEBI" id="CHEBI:43474"/>
        <dbReference type="ChEBI" id="CHEBI:58228"/>
        <dbReference type="EC" id="2.1.3.2"/>
    </reaction>
</comment>
<comment type="pathway">
    <text evidence="1">Pyrimidine metabolism; UMP biosynthesis via de novo pathway; (S)-dihydroorotate from bicarbonate: step 2/3.</text>
</comment>
<comment type="subunit">
    <text evidence="1">Heterododecamer (2C3:3R2) of six catalytic PyrB chains organized as two trimers (C3), and six regulatory PyrI chains organized as three dimers (R2).</text>
</comment>
<comment type="similarity">
    <text evidence="1">Belongs to the aspartate/ornithine carbamoyltransferase superfamily. ATCase family.</text>
</comment>
<protein>
    <recommendedName>
        <fullName evidence="1">Aspartate carbamoyltransferase catalytic subunit</fullName>
        <ecNumber evidence="1">2.1.3.2</ecNumber>
    </recommendedName>
    <alternativeName>
        <fullName evidence="1">Aspartate transcarbamylase</fullName>
        <shortName evidence="1">ATCase</shortName>
    </alternativeName>
</protein>
<name>PYRB_LACP7</name>
<reference key="1">
    <citation type="submission" date="2007-11" db="EMBL/GenBank/DDBJ databases">
        <title>Complete genome sequence of Clostridium phytofermentans ISDg.</title>
        <authorList>
            <person name="Leschine S.B."/>
            <person name="Warnick T.A."/>
            <person name="Blanchard J.L."/>
            <person name="Schnell D.J."/>
            <person name="Petit E.L."/>
            <person name="LaTouf W.G."/>
            <person name="Copeland A."/>
            <person name="Lucas S."/>
            <person name="Lapidus A."/>
            <person name="Barry K."/>
            <person name="Glavina del Rio T."/>
            <person name="Dalin E."/>
            <person name="Tice H."/>
            <person name="Pitluck S."/>
            <person name="Kiss H."/>
            <person name="Brettin T."/>
            <person name="Bruce D."/>
            <person name="Detter J.C."/>
            <person name="Han C."/>
            <person name="Kuske C."/>
            <person name="Schmutz J."/>
            <person name="Larimer F."/>
            <person name="Land M."/>
            <person name="Hauser L."/>
            <person name="Kyrpides N."/>
            <person name="Kim E.A."/>
            <person name="Richardson P."/>
        </authorList>
    </citation>
    <scope>NUCLEOTIDE SEQUENCE [LARGE SCALE GENOMIC DNA]</scope>
    <source>
        <strain>ATCC 700394 / DSM 18823 / ISDg</strain>
    </source>
</reference>
<feature type="chain" id="PRO_0000329106" description="Aspartate carbamoyltransferase catalytic subunit">
    <location>
        <begin position="1"/>
        <end position="307"/>
    </location>
</feature>
<feature type="binding site" evidence="1">
    <location>
        <position position="51"/>
    </location>
    <ligand>
        <name>carbamoyl phosphate</name>
        <dbReference type="ChEBI" id="CHEBI:58228"/>
    </ligand>
</feature>
<feature type="binding site" evidence="1">
    <location>
        <position position="52"/>
    </location>
    <ligand>
        <name>carbamoyl phosphate</name>
        <dbReference type="ChEBI" id="CHEBI:58228"/>
    </ligand>
</feature>
<feature type="binding site" evidence="1">
    <location>
        <position position="80"/>
    </location>
    <ligand>
        <name>L-aspartate</name>
        <dbReference type="ChEBI" id="CHEBI:29991"/>
    </ligand>
</feature>
<feature type="binding site" evidence="1">
    <location>
        <position position="101"/>
    </location>
    <ligand>
        <name>carbamoyl phosphate</name>
        <dbReference type="ChEBI" id="CHEBI:58228"/>
    </ligand>
</feature>
<feature type="binding site" evidence="1">
    <location>
        <position position="129"/>
    </location>
    <ligand>
        <name>carbamoyl phosphate</name>
        <dbReference type="ChEBI" id="CHEBI:58228"/>
    </ligand>
</feature>
<feature type="binding site" evidence="1">
    <location>
        <position position="132"/>
    </location>
    <ligand>
        <name>carbamoyl phosphate</name>
        <dbReference type="ChEBI" id="CHEBI:58228"/>
    </ligand>
</feature>
<feature type="binding site" evidence="1">
    <location>
        <position position="162"/>
    </location>
    <ligand>
        <name>L-aspartate</name>
        <dbReference type="ChEBI" id="CHEBI:29991"/>
    </ligand>
</feature>
<feature type="binding site" evidence="1">
    <location>
        <position position="225"/>
    </location>
    <ligand>
        <name>L-aspartate</name>
        <dbReference type="ChEBI" id="CHEBI:29991"/>
    </ligand>
</feature>
<feature type="binding site" evidence="1">
    <location>
        <position position="264"/>
    </location>
    <ligand>
        <name>carbamoyl phosphate</name>
        <dbReference type="ChEBI" id="CHEBI:58228"/>
    </ligand>
</feature>
<feature type="binding site" evidence="1">
    <location>
        <position position="265"/>
    </location>
    <ligand>
        <name>carbamoyl phosphate</name>
        <dbReference type="ChEBI" id="CHEBI:58228"/>
    </ligand>
</feature>
<accession>A9KNJ3</accession>
<dbReference type="EC" id="2.1.3.2" evidence="1"/>
<dbReference type="EMBL" id="CP000885">
    <property type="protein sequence ID" value="ABX43110.1"/>
    <property type="molecule type" value="Genomic_DNA"/>
</dbReference>
<dbReference type="RefSeq" id="WP_012200761.1">
    <property type="nucleotide sequence ID" value="NC_010001.1"/>
</dbReference>
<dbReference type="SMR" id="A9KNJ3"/>
<dbReference type="STRING" id="357809.Cphy_2750"/>
<dbReference type="KEGG" id="cpy:Cphy_2750"/>
<dbReference type="eggNOG" id="COG0540">
    <property type="taxonomic scope" value="Bacteria"/>
</dbReference>
<dbReference type="HOGENOM" id="CLU_043846_1_2_9"/>
<dbReference type="OrthoDB" id="9774690at2"/>
<dbReference type="UniPathway" id="UPA00070">
    <property type="reaction ID" value="UER00116"/>
</dbReference>
<dbReference type="Proteomes" id="UP000000370">
    <property type="component" value="Chromosome"/>
</dbReference>
<dbReference type="GO" id="GO:0016597">
    <property type="term" value="F:amino acid binding"/>
    <property type="evidence" value="ECO:0007669"/>
    <property type="project" value="InterPro"/>
</dbReference>
<dbReference type="GO" id="GO:0004070">
    <property type="term" value="F:aspartate carbamoyltransferase activity"/>
    <property type="evidence" value="ECO:0007669"/>
    <property type="project" value="UniProtKB-UniRule"/>
</dbReference>
<dbReference type="GO" id="GO:0006207">
    <property type="term" value="P:'de novo' pyrimidine nucleobase biosynthetic process"/>
    <property type="evidence" value="ECO:0007669"/>
    <property type="project" value="InterPro"/>
</dbReference>
<dbReference type="GO" id="GO:0044205">
    <property type="term" value="P:'de novo' UMP biosynthetic process"/>
    <property type="evidence" value="ECO:0007669"/>
    <property type="project" value="UniProtKB-UniRule"/>
</dbReference>
<dbReference type="GO" id="GO:0006520">
    <property type="term" value="P:amino acid metabolic process"/>
    <property type="evidence" value="ECO:0007669"/>
    <property type="project" value="InterPro"/>
</dbReference>
<dbReference type="FunFam" id="3.40.50.1370:FF:000002">
    <property type="entry name" value="Aspartate carbamoyltransferase 2"/>
    <property type="match status" value="1"/>
</dbReference>
<dbReference type="Gene3D" id="3.40.50.1370">
    <property type="entry name" value="Aspartate/ornithine carbamoyltransferase"/>
    <property type="match status" value="2"/>
</dbReference>
<dbReference type="HAMAP" id="MF_00001">
    <property type="entry name" value="Asp_carb_tr"/>
    <property type="match status" value="1"/>
</dbReference>
<dbReference type="InterPro" id="IPR006132">
    <property type="entry name" value="Asp/Orn_carbamoyltranf_P-bd"/>
</dbReference>
<dbReference type="InterPro" id="IPR006130">
    <property type="entry name" value="Asp/Orn_carbamoylTrfase"/>
</dbReference>
<dbReference type="InterPro" id="IPR036901">
    <property type="entry name" value="Asp/Orn_carbamoylTrfase_sf"/>
</dbReference>
<dbReference type="InterPro" id="IPR002082">
    <property type="entry name" value="Asp_carbamoyltransf"/>
</dbReference>
<dbReference type="InterPro" id="IPR006131">
    <property type="entry name" value="Asp_carbamoyltransf_Asp/Orn-bd"/>
</dbReference>
<dbReference type="NCBIfam" id="TIGR00670">
    <property type="entry name" value="asp_carb_tr"/>
    <property type="match status" value="1"/>
</dbReference>
<dbReference type="NCBIfam" id="NF002032">
    <property type="entry name" value="PRK00856.1"/>
    <property type="match status" value="1"/>
</dbReference>
<dbReference type="PANTHER" id="PTHR45753:SF6">
    <property type="entry name" value="ASPARTATE CARBAMOYLTRANSFERASE"/>
    <property type="match status" value="1"/>
</dbReference>
<dbReference type="PANTHER" id="PTHR45753">
    <property type="entry name" value="ORNITHINE CARBAMOYLTRANSFERASE, MITOCHONDRIAL"/>
    <property type="match status" value="1"/>
</dbReference>
<dbReference type="Pfam" id="PF00185">
    <property type="entry name" value="OTCace"/>
    <property type="match status" value="1"/>
</dbReference>
<dbReference type="Pfam" id="PF02729">
    <property type="entry name" value="OTCace_N"/>
    <property type="match status" value="1"/>
</dbReference>
<dbReference type="PRINTS" id="PR00100">
    <property type="entry name" value="AOTCASE"/>
</dbReference>
<dbReference type="PRINTS" id="PR00101">
    <property type="entry name" value="ATCASE"/>
</dbReference>
<dbReference type="SUPFAM" id="SSF53671">
    <property type="entry name" value="Aspartate/ornithine carbamoyltransferase"/>
    <property type="match status" value="1"/>
</dbReference>
<dbReference type="PROSITE" id="PS00097">
    <property type="entry name" value="CARBAMOYLTRANSFERASE"/>
    <property type="match status" value="1"/>
</dbReference>
<proteinExistence type="inferred from homology"/>
<gene>
    <name evidence="1" type="primary">pyrB</name>
    <name type="ordered locus">Cphy_2750</name>
</gene>
<organism>
    <name type="scientific">Lachnoclostridium phytofermentans (strain ATCC 700394 / DSM 18823 / ISDg)</name>
    <name type="common">Clostridium phytofermentans</name>
    <dbReference type="NCBI Taxonomy" id="357809"/>
    <lineage>
        <taxon>Bacteria</taxon>
        <taxon>Bacillati</taxon>
        <taxon>Bacillota</taxon>
        <taxon>Clostridia</taxon>
        <taxon>Lachnospirales</taxon>
        <taxon>Lachnospiraceae</taxon>
    </lineage>
</organism>
<evidence type="ECO:0000255" key="1">
    <source>
        <dbReference type="HAMAP-Rule" id="MF_00001"/>
    </source>
</evidence>